<organism>
    <name type="scientific">Escherichia coli O157:H7 (strain EC4115 / EHEC)</name>
    <dbReference type="NCBI Taxonomy" id="444450"/>
    <lineage>
        <taxon>Bacteria</taxon>
        <taxon>Pseudomonadati</taxon>
        <taxon>Pseudomonadota</taxon>
        <taxon>Gammaproteobacteria</taxon>
        <taxon>Enterobacterales</taxon>
        <taxon>Enterobacteriaceae</taxon>
        <taxon>Escherichia</taxon>
    </lineage>
</organism>
<sequence length="430" mass="45956">MKQALRVAFGFLILWASVLHAEVRIVIDSGVDSGRPIGVVPFQWAGPGAAPEDIGGIVAADLRNSGKFNPLDRARLPQQPGSAQEVQPAAWSALGIDAVVVGQVTPNPDGSYNVAYQLVDTGGAPGTVLAQNSYKVNKQWLRYAGHTASDEVFEKLTGIKGAFRTRIAYVVQTNGGQFPYELRVSDYDGYNQFVVHRSPQPLMSPAWSPDGSKLAYVTFESGRSALVIQTLANGAVRQVASFPRHNGAPAFSPDGSKLAFALSKTGSLNLYVMDLASGQIRQVTDGRSNNTEPTWFPDSQNLAFTSDQAGRPQVYKVNINGGAPQRITWEGSQNQDADVSSDGKFMVMVSSNGGQQHIAKQDLATGGVQVLSSTFLDETPSLAPNGTMVIYSSSQGMGSVLNLVSTDGRFKARLPATDGQVKFPAWSPYL</sequence>
<feature type="signal peptide" evidence="1">
    <location>
        <begin position="1"/>
        <end position="21"/>
    </location>
</feature>
<feature type="chain" id="PRO_1000131523" description="Tol-Pal system protein TolB" evidence="1">
    <location>
        <begin position="22"/>
        <end position="430"/>
    </location>
</feature>
<reference key="1">
    <citation type="journal article" date="2011" name="Proc. Natl. Acad. Sci. U.S.A.">
        <title>Genomic anatomy of Escherichia coli O157:H7 outbreaks.</title>
        <authorList>
            <person name="Eppinger M."/>
            <person name="Mammel M.K."/>
            <person name="Leclerc J.E."/>
            <person name="Ravel J."/>
            <person name="Cebula T.A."/>
        </authorList>
    </citation>
    <scope>NUCLEOTIDE SEQUENCE [LARGE SCALE GENOMIC DNA]</scope>
    <source>
        <strain>EC4115 / EHEC</strain>
    </source>
</reference>
<protein>
    <recommendedName>
        <fullName evidence="1">Tol-Pal system protein TolB</fullName>
    </recommendedName>
</protein>
<proteinExistence type="inferred from homology"/>
<accession>B5YRE4</accession>
<gene>
    <name evidence="1" type="primary">tolB</name>
    <name type="ordered locus">ECH74115_0843</name>
</gene>
<keyword id="KW-0131">Cell cycle</keyword>
<keyword id="KW-0132">Cell division</keyword>
<keyword id="KW-0574">Periplasm</keyword>
<keyword id="KW-0732">Signal</keyword>
<name>TOLB_ECO5E</name>
<comment type="function">
    <text evidence="1">Part of the Tol-Pal system, which plays a role in outer membrane invagination during cell division and is important for maintaining outer membrane integrity. TolB occupies a key intermediary position in the Tol-Pal system because it communicates directly with both membrane-embedded components, Pal in the outer membrane and TolA in the inner membrane.</text>
</comment>
<comment type="subunit">
    <text evidence="1">The Tol-Pal system is composed of five core proteins: the inner membrane proteins TolA, TolQ and TolR, the periplasmic protein TolB and the outer membrane protein Pal. They form a network linking the inner and outer membranes and the peptidoglycan layer.</text>
</comment>
<comment type="subcellular location">
    <subcellularLocation>
        <location evidence="1">Periplasm</location>
    </subcellularLocation>
</comment>
<comment type="similarity">
    <text evidence="1">Belongs to the TolB family.</text>
</comment>
<dbReference type="EMBL" id="CP001164">
    <property type="protein sequence ID" value="ACI38694.1"/>
    <property type="molecule type" value="Genomic_DNA"/>
</dbReference>
<dbReference type="RefSeq" id="WP_001295307.1">
    <property type="nucleotide sequence ID" value="NC_011353.1"/>
</dbReference>
<dbReference type="SMR" id="B5YRE4"/>
<dbReference type="GeneID" id="93776744"/>
<dbReference type="KEGG" id="ecf:ECH74115_0843"/>
<dbReference type="HOGENOM" id="CLU_047123_0_0_6"/>
<dbReference type="GO" id="GO:0042597">
    <property type="term" value="C:periplasmic space"/>
    <property type="evidence" value="ECO:0007669"/>
    <property type="project" value="UniProtKB-SubCell"/>
</dbReference>
<dbReference type="GO" id="GO:0051301">
    <property type="term" value="P:cell division"/>
    <property type="evidence" value="ECO:0007669"/>
    <property type="project" value="UniProtKB-UniRule"/>
</dbReference>
<dbReference type="GO" id="GO:0017038">
    <property type="term" value="P:protein import"/>
    <property type="evidence" value="ECO:0007669"/>
    <property type="project" value="InterPro"/>
</dbReference>
<dbReference type="FunFam" id="2.120.10.30:FF:000022">
    <property type="entry name" value="Tol-Pal system protein TolB"/>
    <property type="match status" value="1"/>
</dbReference>
<dbReference type="FunFam" id="3.40.50.10070:FF:000001">
    <property type="entry name" value="Tol-Pal system protein TolB"/>
    <property type="match status" value="1"/>
</dbReference>
<dbReference type="Gene3D" id="2.120.10.30">
    <property type="entry name" value="TolB, C-terminal domain"/>
    <property type="match status" value="1"/>
</dbReference>
<dbReference type="Gene3D" id="3.40.50.10070">
    <property type="entry name" value="TolB, N-terminal domain"/>
    <property type="match status" value="1"/>
</dbReference>
<dbReference type="HAMAP" id="MF_00671">
    <property type="entry name" value="TolB"/>
    <property type="match status" value="1"/>
</dbReference>
<dbReference type="InterPro" id="IPR011042">
    <property type="entry name" value="6-blade_b-propeller_TolB-like"/>
</dbReference>
<dbReference type="InterPro" id="IPR011659">
    <property type="entry name" value="PD40"/>
</dbReference>
<dbReference type="InterPro" id="IPR014167">
    <property type="entry name" value="Tol-Pal_TolB"/>
</dbReference>
<dbReference type="InterPro" id="IPR007195">
    <property type="entry name" value="TolB_N"/>
</dbReference>
<dbReference type="NCBIfam" id="TIGR02800">
    <property type="entry name" value="propeller_TolB"/>
    <property type="match status" value="1"/>
</dbReference>
<dbReference type="PANTHER" id="PTHR36842:SF1">
    <property type="entry name" value="PROTEIN TOLB"/>
    <property type="match status" value="1"/>
</dbReference>
<dbReference type="PANTHER" id="PTHR36842">
    <property type="entry name" value="PROTEIN TOLB HOMOLOG"/>
    <property type="match status" value="1"/>
</dbReference>
<dbReference type="Pfam" id="PF07676">
    <property type="entry name" value="PD40"/>
    <property type="match status" value="4"/>
</dbReference>
<dbReference type="Pfam" id="PF04052">
    <property type="entry name" value="TolB_N"/>
    <property type="match status" value="1"/>
</dbReference>
<dbReference type="SUPFAM" id="SSF52964">
    <property type="entry name" value="TolB, N-terminal domain"/>
    <property type="match status" value="1"/>
</dbReference>
<dbReference type="SUPFAM" id="SSF69304">
    <property type="entry name" value="Tricorn protease N-terminal domain"/>
    <property type="match status" value="1"/>
</dbReference>
<evidence type="ECO:0000255" key="1">
    <source>
        <dbReference type="HAMAP-Rule" id="MF_00671"/>
    </source>
</evidence>